<organism>
    <name type="scientific">Chlorobium chlorochromatii (strain CaD3)</name>
    <dbReference type="NCBI Taxonomy" id="340177"/>
    <lineage>
        <taxon>Bacteria</taxon>
        <taxon>Pseudomonadati</taxon>
        <taxon>Chlorobiota</taxon>
        <taxon>Chlorobiia</taxon>
        <taxon>Chlorobiales</taxon>
        <taxon>Chlorobiaceae</taxon>
        <taxon>Chlorobium/Pelodictyon group</taxon>
        <taxon>Chlorobium</taxon>
    </lineage>
</organism>
<reference key="1">
    <citation type="submission" date="2005-08" db="EMBL/GenBank/DDBJ databases">
        <title>Complete sequence of Chlorobium chlorochromatii CaD3.</title>
        <authorList>
            <consortium name="US DOE Joint Genome Institute"/>
            <person name="Copeland A."/>
            <person name="Lucas S."/>
            <person name="Lapidus A."/>
            <person name="Barry K."/>
            <person name="Detter J.C."/>
            <person name="Glavina T."/>
            <person name="Hammon N."/>
            <person name="Israni S."/>
            <person name="Pitluck S."/>
            <person name="Bryant D."/>
            <person name="Schmutz J."/>
            <person name="Larimer F."/>
            <person name="Land M."/>
            <person name="Kyrpides N."/>
            <person name="Ivanova N."/>
            <person name="Richardson P."/>
        </authorList>
    </citation>
    <scope>NUCLEOTIDE SEQUENCE [LARGE SCALE GENOMIC DNA]</scope>
    <source>
        <strain>CaD3</strain>
    </source>
</reference>
<comment type="similarity">
    <text evidence="1">Belongs to the UPF0301 (AlgH) family.</text>
</comment>
<accession>Q3AQ69</accession>
<gene>
    <name type="ordered locus">Cag_1601</name>
</gene>
<feature type="chain" id="PRO_0000258816" description="UPF0301 protein Cag_1601">
    <location>
        <begin position="1"/>
        <end position="188"/>
    </location>
</feature>
<name>Y1601_CHLCH</name>
<proteinExistence type="inferred from homology"/>
<sequence length="188" mass="21084">MIVNEFEKLTAGKLLLASATMLESNFKRTVLLMCEHNEEGSLGFILNRPLEFKVREAIHGFNDVDDVLHQGGPVQVNSIHFLHSRGDLIHNSQEVLPGIYWGGNKDEVSYLLNTGVMHPSEIRFYLGYAGWSAGQLFSEFEEGAWYTAEATPDVIFSDAYERMWSRTVRAKGGAYQLIANSPELPGMN</sequence>
<evidence type="ECO:0000255" key="1">
    <source>
        <dbReference type="HAMAP-Rule" id="MF_00758"/>
    </source>
</evidence>
<dbReference type="EMBL" id="CP000108">
    <property type="protein sequence ID" value="ABB28856.1"/>
    <property type="molecule type" value="Genomic_DNA"/>
</dbReference>
<dbReference type="SMR" id="Q3AQ69"/>
<dbReference type="STRING" id="340177.Cag_1601"/>
<dbReference type="KEGG" id="cch:Cag_1601"/>
<dbReference type="eggNOG" id="COG1678">
    <property type="taxonomic scope" value="Bacteria"/>
</dbReference>
<dbReference type="HOGENOM" id="CLU_057596_2_1_10"/>
<dbReference type="GO" id="GO:0005829">
    <property type="term" value="C:cytosol"/>
    <property type="evidence" value="ECO:0007669"/>
    <property type="project" value="TreeGrafter"/>
</dbReference>
<dbReference type="Gene3D" id="3.40.1740.10">
    <property type="entry name" value="VC0467-like"/>
    <property type="match status" value="1"/>
</dbReference>
<dbReference type="HAMAP" id="MF_00758">
    <property type="entry name" value="UPF0301"/>
    <property type="match status" value="1"/>
</dbReference>
<dbReference type="InterPro" id="IPR003774">
    <property type="entry name" value="AlgH-like"/>
</dbReference>
<dbReference type="PANTHER" id="PTHR30327">
    <property type="entry name" value="UNCHARACTERIZED PROTEIN YQGE"/>
    <property type="match status" value="1"/>
</dbReference>
<dbReference type="PANTHER" id="PTHR30327:SF1">
    <property type="entry name" value="UPF0301 PROTEIN YQGE"/>
    <property type="match status" value="1"/>
</dbReference>
<dbReference type="Pfam" id="PF02622">
    <property type="entry name" value="DUF179"/>
    <property type="match status" value="1"/>
</dbReference>
<dbReference type="SUPFAM" id="SSF143456">
    <property type="entry name" value="VC0467-like"/>
    <property type="match status" value="1"/>
</dbReference>
<protein>
    <recommendedName>
        <fullName evidence="1">UPF0301 protein Cag_1601</fullName>
    </recommendedName>
</protein>